<name>GSH1_ECO7I</name>
<reference key="1">
    <citation type="journal article" date="2009" name="PLoS Genet.">
        <title>Organised genome dynamics in the Escherichia coli species results in highly diverse adaptive paths.</title>
        <authorList>
            <person name="Touchon M."/>
            <person name="Hoede C."/>
            <person name="Tenaillon O."/>
            <person name="Barbe V."/>
            <person name="Baeriswyl S."/>
            <person name="Bidet P."/>
            <person name="Bingen E."/>
            <person name="Bonacorsi S."/>
            <person name="Bouchier C."/>
            <person name="Bouvet O."/>
            <person name="Calteau A."/>
            <person name="Chiapello H."/>
            <person name="Clermont O."/>
            <person name="Cruveiller S."/>
            <person name="Danchin A."/>
            <person name="Diard M."/>
            <person name="Dossat C."/>
            <person name="Karoui M.E."/>
            <person name="Frapy E."/>
            <person name="Garry L."/>
            <person name="Ghigo J.M."/>
            <person name="Gilles A.M."/>
            <person name="Johnson J."/>
            <person name="Le Bouguenec C."/>
            <person name="Lescat M."/>
            <person name="Mangenot S."/>
            <person name="Martinez-Jehanne V."/>
            <person name="Matic I."/>
            <person name="Nassif X."/>
            <person name="Oztas S."/>
            <person name="Petit M.A."/>
            <person name="Pichon C."/>
            <person name="Rouy Z."/>
            <person name="Ruf C.S."/>
            <person name="Schneider D."/>
            <person name="Tourret J."/>
            <person name="Vacherie B."/>
            <person name="Vallenet D."/>
            <person name="Medigue C."/>
            <person name="Rocha E.P.C."/>
            <person name="Denamur E."/>
        </authorList>
    </citation>
    <scope>NUCLEOTIDE SEQUENCE [LARGE SCALE GENOMIC DNA]</scope>
    <source>
        <strain>IAI39 / ExPEC</strain>
    </source>
</reference>
<dbReference type="EC" id="6.3.2.2" evidence="1"/>
<dbReference type="EMBL" id="CU928164">
    <property type="protein sequence ID" value="CAR19000.1"/>
    <property type="molecule type" value="Genomic_DNA"/>
</dbReference>
<dbReference type="RefSeq" id="WP_000611781.1">
    <property type="nucleotide sequence ID" value="NC_011750.1"/>
</dbReference>
<dbReference type="RefSeq" id="YP_002408812.1">
    <property type="nucleotide sequence ID" value="NC_011750.1"/>
</dbReference>
<dbReference type="SMR" id="B7NSH3"/>
<dbReference type="STRING" id="585057.ECIAI39_2878"/>
<dbReference type="KEGG" id="ect:ECIAI39_2878"/>
<dbReference type="PATRIC" id="fig|585057.6.peg.2986"/>
<dbReference type="HOGENOM" id="CLU_020728_3_0_6"/>
<dbReference type="UniPathway" id="UPA00142">
    <property type="reaction ID" value="UER00209"/>
</dbReference>
<dbReference type="Proteomes" id="UP000000749">
    <property type="component" value="Chromosome"/>
</dbReference>
<dbReference type="GO" id="GO:0005829">
    <property type="term" value="C:cytosol"/>
    <property type="evidence" value="ECO:0007669"/>
    <property type="project" value="TreeGrafter"/>
</dbReference>
<dbReference type="GO" id="GO:0005524">
    <property type="term" value="F:ATP binding"/>
    <property type="evidence" value="ECO:0007669"/>
    <property type="project" value="UniProtKB-KW"/>
</dbReference>
<dbReference type="GO" id="GO:0004357">
    <property type="term" value="F:glutamate-cysteine ligase activity"/>
    <property type="evidence" value="ECO:0007669"/>
    <property type="project" value="UniProtKB-UniRule"/>
</dbReference>
<dbReference type="GO" id="GO:0046872">
    <property type="term" value="F:metal ion binding"/>
    <property type="evidence" value="ECO:0007669"/>
    <property type="project" value="TreeGrafter"/>
</dbReference>
<dbReference type="GO" id="GO:0006750">
    <property type="term" value="P:glutathione biosynthetic process"/>
    <property type="evidence" value="ECO:0007669"/>
    <property type="project" value="UniProtKB-UniRule"/>
</dbReference>
<dbReference type="FunFam" id="3.30.590.20:FF:000001">
    <property type="entry name" value="Glutamate--cysteine ligase"/>
    <property type="match status" value="1"/>
</dbReference>
<dbReference type="Gene3D" id="3.30.590.20">
    <property type="match status" value="1"/>
</dbReference>
<dbReference type="HAMAP" id="MF_00578">
    <property type="entry name" value="Glu_cys_ligase"/>
    <property type="match status" value="1"/>
</dbReference>
<dbReference type="InterPro" id="IPR014746">
    <property type="entry name" value="Gln_synth/guanido_kin_cat_dom"/>
</dbReference>
<dbReference type="InterPro" id="IPR007370">
    <property type="entry name" value="Glu_cys_ligase"/>
</dbReference>
<dbReference type="InterPro" id="IPR006334">
    <property type="entry name" value="Glut_cys_ligase"/>
</dbReference>
<dbReference type="NCBIfam" id="TIGR01434">
    <property type="entry name" value="glu_cys_ligase"/>
    <property type="match status" value="1"/>
</dbReference>
<dbReference type="PANTHER" id="PTHR38761">
    <property type="entry name" value="GLUTAMATE--CYSTEINE LIGASE"/>
    <property type="match status" value="1"/>
</dbReference>
<dbReference type="PANTHER" id="PTHR38761:SF1">
    <property type="entry name" value="GLUTAMATE--CYSTEINE LIGASE"/>
    <property type="match status" value="1"/>
</dbReference>
<dbReference type="Pfam" id="PF04262">
    <property type="entry name" value="Glu_cys_ligase"/>
    <property type="match status" value="1"/>
</dbReference>
<dbReference type="SUPFAM" id="SSF55931">
    <property type="entry name" value="Glutamine synthetase/guanido kinase"/>
    <property type="match status" value="1"/>
</dbReference>
<proteinExistence type="inferred from homology"/>
<feature type="chain" id="PRO_1000129589" description="Glutamate--cysteine ligase">
    <location>
        <begin position="1"/>
        <end position="518"/>
    </location>
</feature>
<keyword id="KW-0067">ATP-binding</keyword>
<keyword id="KW-0317">Glutathione biosynthesis</keyword>
<keyword id="KW-0436">Ligase</keyword>
<keyword id="KW-0547">Nucleotide-binding</keyword>
<organism>
    <name type="scientific">Escherichia coli O7:K1 (strain IAI39 / ExPEC)</name>
    <dbReference type="NCBI Taxonomy" id="585057"/>
    <lineage>
        <taxon>Bacteria</taxon>
        <taxon>Pseudomonadati</taxon>
        <taxon>Pseudomonadota</taxon>
        <taxon>Gammaproteobacteria</taxon>
        <taxon>Enterobacterales</taxon>
        <taxon>Enterobacteriaceae</taxon>
        <taxon>Escherichia</taxon>
    </lineage>
</organism>
<evidence type="ECO:0000255" key="1">
    <source>
        <dbReference type="HAMAP-Rule" id="MF_00578"/>
    </source>
</evidence>
<accession>B7NSH3</accession>
<sequence length="518" mass="58253">MIPDVSQALAWLEKHPQALKGIQRGLERETLRVNADGTLATTGHPEALGSALTHKWITTDFAEALLEFITPVDGDIEHMLTFMRDLHRYTARNMGDERMWPLSMPCYIAEGQDIELAQYGTSNTGRFKTLYREGLKNRYGALMQTISGVHYNFSLPMAFWQAKCGDIAGADAKEKISAGYFRVIRNYYRFGWVIPYLFGASPAICSSFLQGKPTSLPFEKTECGMYYLPYATSLRLSDLGYTNKSQSNLGITFNDLYEYVAGLKQAIKTPSEEYAKIGIEKDGKRLQINSNVLQIENELYAPIRPKRVTRSGESPSDALLRGGIEYIEVRSLDINPFSPIGVDEQQVRFLDLFMVWCALADAPEMSSSELACTRVNWNRVILEGRKPGLTLGIGCETAQFPLPQVGKDLFRDLKRVAQTLDSINGGEAYQKVCDELVACFDNPDLTFSARILRSMIDTGIGGTGKAFAEAYRNLLREEPLEILREEDFVAEREASERRQQEMEAADTEPFAVWLEKHA</sequence>
<protein>
    <recommendedName>
        <fullName evidence="1">Glutamate--cysteine ligase</fullName>
        <ecNumber evidence="1">6.3.2.2</ecNumber>
    </recommendedName>
    <alternativeName>
        <fullName evidence="1">Gamma-ECS</fullName>
        <shortName evidence="1">GCS</shortName>
    </alternativeName>
    <alternativeName>
        <fullName evidence="1">Gamma-glutamylcysteine synthetase</fullName>
    </alternativeName>
</protein>
<gene>
    <name evidence="1" type="primary">gshA</name>
    <name type="ordered locus">ECIAI39_2878</name>
</gene>
<comment type="catalytic activity">
    <reaction evidence="1">
        <text>L-cysteine + L-glutamate + ATP = gamma-L-glutamyl-L-cysteine + ADP + phosphate + H(+)</text>
        <dbReference type="Rhea" id="RHEA:13285"/>
        <dbReference type="ChEBI" id="CHEBI:15378"/>
        <dbReference type="ChEBI" id="CHEBI:29985"/>
        <dbReference type="ChEBI" id="CHEBI:30616"/>
        <dbReference type="ChEBI" id="CHEBI:35235"/>
        <dbReference type="ChEBI" id="CHEBI:43474"/>
        <dbReference type="ChEBI" id="CHEBI:58173"/>
        <dbReference type="ChEBI" id="CHEBI:456216"/>
        <dbReference type="EC" id="6.3.2.2"/>
    </reaction>
</comment>
<comment type="pathway">
    <text evidence="1">Sulfur metabolism; glutathione biosynthesis; glutathione from L-cysteine and L-glutamate: step 1/2.</text>
</comment>
<comment type="similarity">
    <text evidence="1">Belongs to the glutamate--cysteine ligase type 1 family. Type 1 subfamily.</text>
</comment>